<comment type="catalytic activity">
    <reaction evidence="1">
        <text>tRNA(Gly) + glycine + ATP = glycyl-tRNA(Gly) + AMP + diphosphate</text>
        <dbReference type="Rhea" id="RHEA:16013"/>
        <dbReference type="Rhea" id="RHEA-COMP:9664"/>
        <dbReference type="Rhea" id="RHEA-COMP:9683"/>
        <dbReference type="ChEBI" id="CHEBI:30616"/>
        <dbReference type="ChEBI" id="CHEBI:33019"/>
        <dbReference type="ChEBI" id="CHEBI:57305"/>
        <dbReference type="ChEBI" id="CHEBI:78442"/>
        <dbReference type="ChEBI" id="CHEBI:78522"/>
        <dbReference type="ChEBI" id="CHEBI:456215"/>
        <dbReference type="EC" id="6.1.1.14"/>
    </reaction>
</comment>
<comment type="subunit">
    <text evidence="1">Tetramer of two alpha and two beta subunits.</text>
</comment>
<comment type="subcellular location">
    <subcellularLocation>
        <location evidence="1">Cytoplasm</location>
    </subcellularLocation>
</comment>
<comment type="similarity">
    <text evidence="1">Belongs to the class-II aminoacyl-tRNA synthetase family.</text>
</comment>
<evidence type="ECO:0000255" key="1">
    <source>
        <dbReference type="HAMAP-Rule" id="MF_00255"/>
    </source>
</evidence>
<keyword id="KW-0030">Aminoacyl-tRNA synthetase</keyword>
<keyword id="KW-0067">ATP-binding</keyword>
<keyword id="KW-0963">Cytoplasm</keyword>
<keyword id="KW-0436">Ligase</keyword>
<keyword id="KW-0547">Nucleotide-binding</keyword>
<keyword id="KW-0648">Protein biosynthesis</keyword>
<organism>
    <name type="scientific">Limosilactobacillus reuteri subsp. reuteri (strain JCM 1112)</name>
    <name type="common">Lactobacillus reuteri</name>
    <dbReference type="NCBI Taxonomy" id="557433"/>
    <lineage>
        <taxon>Bacteria</taxon>
        <taxon>Bacillati</taxon>
        <taxon>Bacillota</taxon>
        <taxon>Bacilli</taxon>
        <taxon>Lactobacillales</taxon>
        <taxon>Lactobacillaceae</taxon>
        <taxon>Limosilactobacillus</taxon>
    </lineage>
</organism>
<reference key="1">
    <citation type="journal article" date="2008" name="DNA Res.">
        <title>Comparative genome analysis of Lactobacillus reuteri and Lactobacillus fermentum reveal a genomic island for reuterin and cobalamin production.</title>
        <authorList>
            <person name="Morita H."/>
            <person name="Toh H."/>
            <person name="Fukuda S."/>
            <person name="Horikawa H."/>
            <person name="Oshima K."/>
            <person name="Suzuki T."/>
            <person name="Murakami M."/>
            <person name="Hisamatsu S."/>
            <person name="Kato Y."/>
            <person name="Takizawa T."/>
            <person name="Fukuoka H."/>
            <person name="Yoshimura T."/>
            <person name="Itoh K."/>
            <person name="O'Sullivan D.J."/>
            <person name="McKay L.L."/>
            <person name="Ohno H."/>
            <person name="Kikuchi J."/>
            <person name="Masaoka T."/>
            <person name="Hattori M."/>
        </authorList>
    </citation>
    <scope>NUCLEOTIDE SEQUENCE [LARGE SCALE GENOMIC DNA]</scope>
    <source>
        <strain>JCM 1112</strain>
    </source>
</reference>
<name>SYGB_LIMRJ</name>
<feature type="chain" id="PRO_1000101295" description="Glycine--tRNA ligase beta subunit">
    <location>
        <begin position="1"/>
        <end position="691"/>
    </location>
</feature>
<proteinExistence type="inferred from homology"/>
<protein>
    <recommendedName>
        <fullName evidence="1">Glycine--tRNA ligase beta subunit</fullName>
        <ecNumber evidence="1">6.1.1.14</ecNumber>
    </recommendedName>
    <alternativeName>
        <fullName evidence="1">Glycyl-tRNA synthetase beta subunit</fullName>
        <shortName evidence="1">GlyRS</shortName>
    </alternativeName>
</protein>
<sequence length="691" mass="78537">MANTYLLEVGVEEMPAHVVTPSIKQLHERVAKYLKEQRITFDDIQEFATPRRMALLIHGLSDKQPDIDESVKGPAKKIAQDADGNWTKAAIGFTRGQGASVEDIEFKEVKGVEYVFVEKHIAGKTVAEVLQGLPAVITSMTFPTLMKWGYNNLQFIRPIRWLVSLLNDEVVPFNILDVEAGRETQGHRFLGHPVEIAKADDYEETLNNDFVIADQTKRKNLIKDQITKIINENNWQVDWDEDLLEEVNNLVEWPTAFAGSFDEKYLALPDPVLITSMKDNQRFFCVRDGDGNLLSHFISVRNGNTDYLDNVIKGNERVLVPRLEDAQFFYQEDQKLTIDEYVERLKKVSFHDKISSMYDKMQRVAVIANVLGKQLNLSDEELADLDRAAHIYKFDLTTQMVGEFAELQGIMGEIYAKLFGEKDDVATAIREHYMPISAEGELPQTKIGAVLAIADKLDSIMSFFAVDMIPSGSNDPYALRRQAFGIVRIIADRGWHLPLLSIQSEIAPAFENAEINVSFDLNKNSDEVRSFFLDRIKQLFHGQKVRHDIIDAATDTRQNDIANILEAIQTIDDHKDDDNFKEDIEALTRVLRIAKKDKRPVSELVVDPNLFENPSEAKMHTAVSELIKENQQTVSENFAALRTLTPIISEYFDENMIMDKNEDIRNNRLAQLSILAHQASLIGNLDNLIVK</sequence>
<dbReference type="EC" id="6.1.1.14" evidence="1"/>
<dbReference type="EMBL" id="AP007281">
    <property type="protein sequence ID" value="BAG25228.1"/>
    <property type="molecule type" value="Genomic_DNA"/>
</dbReference>
<dbReference type="RefSeq" id="WP_003668126.1">
    <property type="nucleotide sequence ID" value="NC_010609.1"/>
</dbReference>
<dbReference type="SMR" id="B2G6Z6"/>
<dbReference type="KEGG" id="lrf:LAR_0712"/>
<dbReference type="HOGENOM" id="CLU_007220_2_2_9"/>
<dbReference type="GO" id="GO:0005829">
    <property type="term" value="C:cytosol"/>
    <property type="evidence" value="ECO:0007669"/>
    <property type="project" value="TreeGrafter"/>
</dbReference>
<dbReference type="GO" id="GO:0004814">
    <property type="term" value="F:arginine-tRNA ligase activity"/>
    <property type="evidence" value="ECO:0007669"/>
    <property type="project" value="InterPro"/>
</dbReference>
<dbReference type="GO" id="GO:0005524">
    <property type="term" value="F:ATP binding"/>
    <property type="evidence" value="ECO:0007669"/>
    <property type="project" value="UniProtKB-UniRule"/>
</dbReference>
<dbReference type="GO" id="GO:0004820">
    <property type="term" value="F:glycine-tRNA ligase activity"/>
    <property type="evidence" value="ECO:0007669"/>
    <property type="project" value="UniProtKB-UniRule"/>
</dbReference>
<dbReference type="GO" id="GO:0006420">
    <property type="term" value="P:arginyl-tRNA aminoacylation"/>
    <property type="evidence" value="ECO:0007669"/>
    <property type="project" value="InterPro"/>
</dbReference>
<dbReference type="GO" id="GO:0006426">
    <property type="term" value="P:glycyl-tRNA aminoacylation"/>
    <property type="evidence" value="ECO:0007669"/>
    <property type="project" value="UniProtKB-UniRule"/>
</dbReference>
<dbReference type="HAMAP" id="MF_00255">
    <property type="entry name" value="Gly_tRNA_synth_beta"/>
    <property type="match status" value="1"/>
</dbReference>
<dbReference type="InterPro" id="IPR008909">
    <property type="entry name" value="DALR_anticod-bd"/>
</dbReference>
<dbReference type="InterPro" id="IPR015944">
    <property type="entry name" value="Gly-tRNA-synth_bsu"/>
</dbReference>
<dbReference type="InterPro" id="IPR006194">
    <property type="entry name" value="Gly-tRNA-synth_heterodimer"/>
</dbReference>
<dbReference type="NCBIfam" id="TIGR00211">
    <property type="entry name" value="glyS"/>
    <property type="match status" value="1"/>
</dbReference>
<dbReference type="PANTHER" id="PTHR30075:SF2">
    <property type="entry name" value="GLYCINE--TRNA LIGASE, CHLOROPLASTIC_MITOCHONDRIAL 2"/>
    <property type="match status" value="1"/>
</dbReference>
<dbReference type="PANTHER" id="PTHR30075">
    <property type="entry name" value="GLYCYL-TRNA SYNTHETASE"/>
    <property type="match status" value="1"/>
</dbReference>
<dbReference type="Pfam" id="PF05746">
    <property type="entry name" value="DALR_1"/>
    <property type="match status" value="1"/>
</dbReference>
<dbReference type="Pfam" id="PF02092">
    <property type="entry name" value="tRNA_synt_2f"/>
    <property type="match status" value="1"/>
</dbReference>
<dbReference type="PRINTS" id="PR01045">
    <property type="entry name" value="TRNASYNTHGB"/>
</dbReference>
<dbReference type="SUPFAM" id="SSF109604">
    <property type="entry name" value="HD-domain/PDEase-like"/>
    <property type="match status" value="1"/>
</dbReference>
<dbReference type="PROSITE" id="PS50861">
    <property type="entry name" value="AA_TRNA_LIGASE_II_GLYAB"/>
    <property type="match status" value="1"/>
</dbReference>
<gene>
    <name evidence="1" type="primary">glyS</name>
    <name type="ordered locus">LAR_0712</name>
</gene>
<accession>B2G6Z6</accession>